<organism>
    <name type="scientific">Homo sapiens</name>
    <name type="common">Human</name>
    <dbReference type="NCBI Taxonomy" id="9606"/>
    <lineage>
        <taxon>Eukaryota</taxon>
        <taxon>Metazoa</taxon>
        <taxon>Chordata</taxon>
        <taxon>Craniata</taxon>
        <taxon>Vertebrata</taxon>
        <taxon>Euteleostomi</taxon>
        <taxon>Mammalia</taxon>
        <taxon>Eutheria</taxon>
        <taxon>Euarchontoglires</taxon>
        <taxon>Primates</taxon>
        <taxon>Haplorrhini</taxon>
        <taxon>Catarrhini</taxon>
        <taxon>Hominidae</taxon>
        <taxon>Homo</taxon>
    </lineage>
</organism>
<gene>
    <name evidence="19" type="primary">RYR3</name>
    <name type="synonym">HBRR</name>
</gene>
<proteinExistence type="evidence at protein level"/>
<name>RYR3_HUMAN</name>
<sequence length="4870" mass="552042">MAEGGEGGEDEIQFLRTEDEVVLQCIATIHKEQRKFCLAAEGLGNRLCFLEPTSEAKYIPPDLCVCNFVLEQSLSVRALQEMLANTGENGGEGAAQGGGHRTLLYGHAVLLRHSFSGMYLTCLTTSRSQTDKLAFDVGLREHATGEACWWTIHPASKQRSEGEKVRIGDDLILVSVSSERYLHLSVSNGNIQVDASFMQTLWNVHPTCSGSSIEEGYLLGGHVVRLFHGHDECLTIPSTDQNDSQHRRIFYEAGGAGTRARSLWRVEPLRISWSGSNIRWGQAFRLRHLTTGHYLALTEDQGLILQDRAKSDTKSTAFSFRASKELKEKLDSSHKRDIEGMGVPEIKYGDSVCFVQHIASGLWVTYKAQDAKTSRLGPLKRKVILHQEGHMDDGLTLQRCQREESQAARIIRNTTALFSQFVSGNNRTAAPITLPIEEVLQTLQDLIAYFQPPEEEMRHEDKQNKLRSLKNRQNLFKEEGMLALVLNCIDRLNVYNSVAHFAGIAREESGMAWKEILNLLYKLLAALIRGNRNNCAQFSNNLDWLISKLDRLESSSGILEVLHCILTESPEALNLIAEGHIKSIISLLDKHGRNHKVLDILCSLCLCNGVAVRANQNLICDNLLPRRNLLLQTRLINDVTSIRPNIFLGVAEGSAQYKKWYFELIIDQVDPFLTAEPTHLRVGWASSSGYAPYPGGGEGWGGNGVGDDLYSYGFDGLHLWSGRIPRAVASINQHLLRSDDVVSCCLDLGVPSISFRINGQPVQGMFENFNTDGLFFPVMSFSAGVKVRFLMGGRHGEFKFLPPSGYAPCYEALLPKEKMRLEPVKEYKRDADGIRDLLGTTQFLSQASFIPCPVDTSQVILPPHLEKIRDRLAENIHELWGMNKIELGWTFGKIRDDNKRQHPCLVEFSKLPETEKNYNLQMSTETLKTLLALGCHIAHVNPAAEEDLKKVKLPKNYMMSNGYKPAPLDLSDVKLLPPQEILVDKLAENAHNVWAKDRIKQGWTYGIQQDLKNKRNPRLVPYALLDERTKKSNRDSLREAVRTFVGYGYNIEPSDQELADSAVEKVSIDKIRFFRVERSYAVRSGKWYFEFEVVTGGDMRVGWARPGCRPDVELGADDQAFVFEGNRGQRWHQGSGYFGRTWQPGDVVGCMINLDDASMIFTLNGELLITNKGSELAFADYEIENGFVPICCLGLSQIGRMNLGTDASTFKFYTMCGLQEGFEPFAVNMNRDVAMWFSKRLPTFVNVPKDHPHIEVMRIDGTMDSPPCLKVTHKTFGTQNSNADMIYCRLSMPVECHSSFSHSPCLDSEAFQKRKQMQEILSHTTTQCYYAIRIFAGQDPSCVWVGWVTPDYHLYSEKFDLNKNCTVTVTLGDERGRVHESVKRSNCYMVWGGDIVASSQRSNRSNVDLEIGCLVDLAMGMLSFSANGKELGTCYQVEPNTKVFPAVFLQPTSTSLFQFELGKLKNAMPLSAAIFRSEEKNPVPQCPPRLDVQTIQPVLWSRMPNSFLKVETERVSERHGWVVQCLEPLQMMALHIPEENRCVDILELCEQEDLMRFHYHTLRLYSAVCALGNSRVAYALCSHVDLSQLFYAIDNKYLPGLLRSGFYDLLISIHLASAKERKLMMKNEYIIPITSTTRNIRLFPDESKRHGLPGVGLRTCLKPGFRFSTPCFVVTGEDHQKQSPEIPLESLRTKALSMLTEAVQCSGAHIRDPVGGSVEFQFVPVLKLIGTLLVMGVFDDDDVRQILLLIDPSVFGEHSAGTEEGAEKEEVTQVEEKAVEAGEKAGKEAPVKGLLQTRLPESVKLQMCELLSYLCDCELQHRVEAIVAFGDIYVSKLQANQKFRYNELMQALNMSAALTARKTKEFRSPPQEQINMLLNFQLGENCPCPEEIREELYDFHEDLLLHCGVPLEEEEEEEEDTSWTGKLCALVYKIKGPPKPEKEQPTEEEERCPTTLKELISQTMICWAQEDQIQDSELVRMMFNLLRRQYDSIGELLQALRKTYTISHTSVSDTINLLAALGQIRSLLSVRMGKEEELLMINGLGDIMNNKVFYQHPNLMRVLGMHETVMEVMVNVLGTEKSQIAFPKMVASCCRFLCYFCRISRQNQKAMFEHLSYLLENSSVGLASPSMRGSTPLDVAASSVMDNNELALSLEEPDLEKVVTYLAGCGLQSCPMLLAKGYPDVGWNPIEGERYLSFLRFAVFVNSESVEENASVVVKLLIRRPECFGPALRGEGGNGLLAAMQGAIKISENPALDLPSQGYKREVSTGDDEEEEEIVHMGNAIMSFYSALIDLLGRCAPEMHLIQTGKGEAIRIRSILRSLVPTEDLVGIISIPLKLPSLNKDGSVSEPDMAANFCPDHKAPMVLFLDRVYGIKDQTFLLHLLEVGFLPDLRASASLDTVSLSTTEAALALNRYICSAVLPLLTRCAPLFAGTEHCTSLIDSTLQTIYRLSKGRSLTKAQRDTIEECLLAICNHLRPSMLQQLLRRLVFDVPQLNEYCKMPLKLLTNHYEQCWKYYCLPSGWGSYGLAVEEELHLTEKLFWGIFDSLSHKKYDPDLFRMALPCLSAIAGALPPDYLDTRITATLEKQISVDADGNFDPKPINTMNFSLPEKLEYIVTKYAEHSHDKWACDKSQSGWKYGISLDENVKTHPLIRPFKTLTEKEKEIYRWPARESLKTMLAVGWTVERTKEGEALVQQRENEKLRSVSQANQGNSYSPAPLDLSNVVLSRELQGMVEVVAENYHNIWAKKKKLELESKGGGSHPLLVPYDTLTAKEKFKDREKAQDLFKFLQVNGIIVSRGMKDMELDASSMEKRFAYKFLKKILKYVDSAQEFIAHLEAIVSSGKTEKSPRDQEIKFFAKVLLPLVDQYFTSHCLYFLSSPLKPLSSSGYASHKEKEMVAGLFCKLAALVRHRISLFGSDSTTMVSCLHILAQTLDTRTVMKSGSELVKAGLRAFFENAAEDLEKTSENLKLGKFTHSRTQIKGVSQNINYTTVALLPILTSIFEHVTQHQFGMDLLLGDVQISCYHILCSLYSLGTGKNIYVERQRPALGECLASLAAAIPVAFLEPTLNRYNPLSVFNTKTPRERSILGMPDTVEDMCPDIPQLEGLMKEINDLAESGARYTEMPHVIEVILPMLCNYLSYWWERGPENLPPSTGPCCTKVTSEHLSLILGNILKIINNNLGIDEASWMKRIAVYAQPIISKARPDLLRSHFIPTLEKLKKKAVKTVQEEEQLKADGKGDTQEAELLILDEFAVLCRDLYAFYPMLIRYVDNNRSNWLKSPDADSDQLFRMVAEVFILWCKSHNFKREEQNFVIQNEINNLAFLTGDSKSKMSKAMQVKSGGQDQERKKTKRRGDLYSIQTSLIVAALKKMLPIGLNMCTPGDQELISLAKSRYSHRDTDEEVREHLRNNLHLQEKSDDPAVKWQLNLYKDVLKSEEPFNPEKTVERVQRISAAVFHLEQVEQPLRSKKAVWHKLLSKQRKRAVVACFRMAPLYNLPRHRSINLFLHGYQRFWIETEEYSFEEKLVQDLAKSPKVEEEEEEETEKQPDPLHQIILYFSRNALTERSKLEDDPLYTSYSSMMAKSCQSGEDEEEDEDKEKTFEEKEMEKQKTLYQQARLHERGAAEMVLQMISASKGEMSPMVVETLKLGIAILNGGNAGVQQKMLDYLKEKKDAGFFQSLSGLMQSCSVLDLNAFERQNKAEGLGMVTEEGTLIVRERGEKVLQNDEFTRDLFRFLQLLCEGHNSDFQNFLRTQMGNTTTVNVIISTVDYLLRLQESISDFYWYYSGKDIIDESGQHNFSKALAVTKQIFNSLTEYIQGPCIGNQQSLAHSRLWDAVVGFLHVFANMQMKLSQDSSQIELLKELLDLLQDMVVMLLSLLEGNVVNGTIGKQMVDTLVESSTNVEMILKFFDMFLKLKDLTSSDTFKEYDPDGKGIISKKEFQKAMEGQKQYTQSEIDFLLSCAEADENDMFNYVDFVDRFHEPAKDIGFNVAVLLTNLSEHMPNDSRLKCLLDPAESVLNYFEPYLGRIEIMGGAKKIERVYFEISESSRTQWEKPQVKESKRQFIFDVVNEGGEQEKMELFVNFCEDTIFEMQLASQISESDSADRPEEEEEDEDSSYVLEIAGEEEEDGSLEPASAFAMACASVKRNVTDFLKRATLKNLRKQYRNVKKMTAKELVKVLFSFFWMLFVGLFQLLFTILGGIFQILWSTVFGGGLVEGAKNIRVTKILGDMPDPTQFGIHDDTMEAERAEVMEPGITTELVHFIKGEKGDTDIMSDLFGLHPKKEGSLKHGPEVGLGDLSEIIGKDEPPTLESTVQKKRKAQAAEMKAANEAEGKVESEKADMEDGEKEDKDKEEEQAEYLWTEVTKKKKRRCGQKVEKPEAFTANFFKGLEIYQTKLLHYLARNFYNLRFLALFVAFAINFILLFYKVTEEPLEEETEDVANLWNSFNDEEEEEAMVFFVLQESTGYMAPTLRALAIIHTIISLVCVVGYYCLKVPLVVFKREKEIARKLEFDGLYITEQPSEDDIKGQWDRLVINTPSFPNNYWDKFVKRKVINKYGDLYGAERIAELLGLDKNALDFSPVEETKAEAASLVSWLSSIDMKYHIWKLGVVFTDNSFLYLAWYTTMSVLGHYNNFFFAAHLLDIAMGFKTLRTILSSVTHNGKQLVLTVGLLAVVVYLYTVVAFNFFRKFYNKSEDDDEPDMKCDDMMTCYLFHMYVGVRAGGGIGDEIEDPAGDPYEMYRIVFDITFFFFVIVILLAIIQGLIIDAFGELRDQQEQVREDMETKCFICGIGNDYFDTTPHGFETHTLQEHNLANYLFFLMYLINKDETEHTGQESYVWKMYQERCWDFFPAGDCFRKQYEDQLG</sequence>
<reference key="1">
    <citation type="journal article" date="1997" name="FEBS Lett.">
        <title>Molecular cloning and characterization of a human brain ryanodine receptor.</title>
        <authorList>
            <person name="Nakashima Y."/>
            <person name="Nishimura S."/>
            <person name="Maeda A."/>
            <person name="Barsoumian E.L."/>
            <person name="Hakamata Y."/>
            <person name="Nakai J."/>
            <person name="Allen P.D."/>
            <person name="Imoto K."/>
            <person name="Kita T."/>
        </authorList>
    </citation>
    <scope>NUCLEOTIDE SEQUENCE [MRNA] (ISOFORM 2)</scope>
    <scope>FUNCTION</scope>
    <scope>TRANSPORTER ACTIVITY</scope>
    <scope>TISSUE SPECIFICITY</scope>
    <source>
        <tissue>Brain</tissue>
    </source>
</reference>
<reference key="2">
    <citation type="journal article" date="1998" name="FEBS Lett.">
        <title>cDNA cloning and sequencing of the human ryanodine receptor type 3 (RYR3) reveals a novel alternative splice site in the RYR3 gene.</title>
        <authorList>
            <person name="Leeb T."/>
            <person name="Brenig B."/>
        </authorList>
    </citation>
    <scope>NUCLEOTIDE SEQUENCE [MRNA] (ISOFORM 1)</scope>
    <scope>ALTERNATIVE SPLICING</scope>
    <scope>VARIANTS SER-261; ILE-494; CYS-693; VAL-731; GLY-1380 AND SER-2268 DEL</scope>
    <source>
        <tissue>Fetal brain</tissue>
    </source>
</reference>
<reference key="3">
    <citation type="journal article" date="2006" name="Nature">
        <title>Analysis of the DNA sequence and duplication history of human chromosome 15.</title>
        <authorList>
            <person name="Zody M.C."/>
            <person name="Garber M."/>
            <person name="Sharpe T."/>
            <person name="Young S.K."/>
            <person name="Rowen L."/>
            <person name="O'Neill K."/>
            <person name="Whittaker C.A."/>
            <person name="Kamal M."/>
            <person name="Chang J.L."/>
            <person name="Cuomo C.A."/>
            <person name="Dewar K."/>
            <person name="FitzGerald M.G."/>
            <person name="Kodira C.D."/>
            <person name="Madan A."/>
            <person name="Qin S."/>
            <person name="Yang X."/>
            <person name="Abbasi N."/>
            <person name="Abouelleil A."/>
            <person name="Arachchi H.M."/>
            <person name="Baradarani L."/>
            <person name="Birditt B."/>
            <person name="Bloom S."/>
            <person name="Bloom T."/>
            <person name="Borowsky M.L."/>
            <person name="Burke J."/>
            <person name="Butler J."/>
            <person name="Cook A."/>
            <person name="DeArellano K."/>
            <person name="DeCaprio D."/>
            <person name="Dorris L. III"/>
            <person name="Dors M."/>
            <person name="Eichler E.E."/>
            <person name="Engels R."/>
            <person name="Fahey J."/>
            <person name="Fleetwood P."/>
            <person name="Friedman C."/>
            <person name="Gearin G."/>
            <person name="Hall J.L."/>
            <person name="Hensley G."/>
            <person name="Johnson E."/>
            <person name="Jones C."/>
            <person name="Kamat A."/>
            <person name="Kaur A."/>
            <person name="Locke D.P."/>
            <person name="Madan A."/>
            <person name="Munson G."/>
            <person name="Jaffe D.B."/>
            <person name="Lui A."/>
            <person name="Macdonald P."/>
            <person name="Mauceli E."/>
            <person name="Naylor J.W."/>
            <person name="Nesbitt R."/>
            <person name="Nicol R."/>
            <person name="O'Leary S.B."/>
            <person name="Ratcliffe A."/>
            <person name="Rounsley S."/>
            <person name="She X."/>
            <person name="Sneddon K.M.B."/>
            <person name="Stewart S."/>
            <person name="Sougnez C."/>
            <person name="Stone S.M."/>
            <person name="Topham K."/>
            <person name="Vincent D."/>
            <person name="Wang S."/>
            <person name="Zimmer A.R."/>
            <person name="Birren B.W."/>
            <person name="Hood L."/>
            <person name="Lander E.S."/>
            <person name="Nusbaum C."/>
        </authorList>
    </citation>
    <scope>NUCLEOTIDE SEQUENCE [LARGE SCALE GENOMIC DNA]</scope>
</reference>
<reference key="4">
    <citation type="journal article" date="1998" name="Neuroscience">
        <title>Partial cloning and differential expression of ryanodine receptor/calcium-release channel genes in human tissues including the hippocampus and cerebellum.</title>
        <authorList>
            <person name="Martin C."/>
            <person name="Chapman K.E."/>
            <person name="Seckl J.R."/>
            <person name="Ashley R.H."/>
        </authorList>
    </citation>
    <scope>NUCLEOTIDE SEQUENCE [MRNA] OF 520-660</scope>
    <scope>TISSUE SPECIFICITY</scope>
    <source>
        <tissue>Skeletal muscle</tissue>
    </source>
</reference>
<reference key="5">
    <citation type="journal article" date="1994" name="FEBS Lett.">
        <title>Involvement of the brain type of ryanodine receptor in T-cell proliferation.</title>
        <authorList>
            <person name="Hakamata Y."/>
            <person name="Nishimura S."/>
            <person name="Nakai J."/>
            <person name="Nakashima Y."/>
            <person name="Kita T."/>
            <person name="Imoto K."/>
        </authorList>
    </citation>
    <scope>NUCLEOTIDE SEQUENCE [MRNA] OF 3943-4870</scope>
    <source>
        <tissue>T-cell</tissue>
    </source>
</reference>
<reference key="6">
    <citation type="journal article" date="1993" name="Genomics">
        <title>Localization of a novel ryanodine receptor gene (RYR3) to human chromosome 15q14-q15 by in situ hybridization.</title>
        <authorList>
            <person name="Sorrentino V."/>
            <person name="Giannini G."/>
            <person name="Malzac P."/>
            <person name="Mattei M.-G."/>
        </authorList>
    </citation>
    <scope>NUCLEOTIDE SEQUENCE [GENOMIC DNA / MRNA] OF 4644-4842</scope>
    <source>
        <tissue>Cervix carcinoma</tissue>
        <tissue>Hepatoma</tissue>
    </source>
</reference>
<reference key="7">
    <citation type="journal article" date="1995" name="FEBS Lett.">
        <title>Isolation and partial cloning of ryanodine-sensitive Ca2+ release channel protein isoforms from human myometrial smooth muscle.</title>
        <authorList>
            <person name="Lynn S."/>
            <person name="Morgan J.M."/>
            <person name="Lamb H.K."/>
            <person name="Meissner G."/>
            <person name="Gillespie J.I."/>
        </authorList>
    </citation>
    <scope>NUCLEOTIDE SEQUENCE [MRNA] OF 4652-4803</scope>
    <source>
        <tissue>Myometrium</tissue>
    </source>
</reference>
<reference key="8">
    <citation type="journal article" date="2002" name="J. Biol. Chem.">
        <title>Knock-down of the type 3 ryanodine receptor impairs sustained Ca2+ signaling via the T cell receptor/CD3 complex.</title>
        <authorList>
            <person name="Schwarzmann N."/>
            <person name="Kunerth S."/>
            <person name="Weber K."/>
            <person name="Mayr G.W."/>
            <person name="Guse A.H."/>
        </authorList>
    </citation>
    <scope>FUNCTION</scope>
    <scope>TRANSPORTER ACTIVITY</scope>
</reference>
<reference key="9">
    <citation type="journal article" date="2012" name="Arch. Biochem. Biophys.">
        <title>Characterization of the binding sites for the interactions between FKBP12 and intracellular calcium release channels.</title>
        <authorList>
            <person name="Wen H."/>
            <person name="Kang S."/>
            <person name="Song Y."/>
            <person name="Song Y."/>
            <person name="Yang H.J."/>
            <person name="Kim M.H."/>
            <person name="Park S."/>
        </authorList>
    </citation>
    <scope>INTERACTION WITH FKBP1A</scope>
</reference>
<reference evidence="20" key="10">
    <citation type="journal article" date="2012" name="Structure">
        <title>Disease mutations in the ryanodine receptor central region: crystal structures of a phosphorylation hot spot domain.</title>
        <authorList>
            <person name="Yuchi Z."/>
            <person name="Lau K."/>
            <person name="Van Petegem F."/>
        </authorList>
    </citation>
    <scope>X-RAY CRYSTALLOGRAPHY (1.75 ANGSTROMS) OF 2597-2800</scope>
</reference>
<reference key="11">
    <citation type="journal article" date="2018" name="Eur. J. Neurol.">
        <title>Ryanodine receptor type 3 (RYR3) as a novel gene associated with a myopathy with nemaline bodies.</title>
        <authorList>
            <person name="Nilipour Y."/>
            <person name="Nafissi S."/>
            <person name="Tjust A.E."/>
            <person name="Ravenscroft G."/>
            <person name="Hossein Nejad Nedai H."/>
            <person name="Taylor R.L."/>
            <person name="Varasteh V."/>
            <person name="Pedrosa Domelloef F."/>
            <person name="Zangi M."/>
            <person name="Tonekaboni S.H."/>
            <person name="Olive M."/>
            <person name="Kiiski K."/>
            <person name="Sagath L."/>
            <person name="Davis M.R."/>
            <person name="Laing N.G."/>
            <person name="Tajsharghi H."/>
        </authorList>
    </citation>
    <scope>VARIANTS CMYO20 VAL-2070 AND LEU-2980</scope>
    <scope>INVOLVEMENT IN CMYO20</scope>
</reference>
<reference key="12">
    <citation type="journal article" date="2019" name="Am. J. Hum. Genet.">
        <title>The Genomics of Arthrogryposis, a Complex Trait: Candidate Genes and Further Evidence for Oligogenic Inheritance.</title>
        <authorList>
            <consortium name="Baylor-Hopkins Center for Mendelian Genomics"/>
            <person name="Pehlivan D."/>
            <person name="Bayram Y."/>
            <person name="Gunes N."/>
            <person name="Coban Akdemir Z."/>
            <person name="Shukla A."/>
            <person name="Bierhals T."/>
            <person name="Tabakci B."/>
            <person name="Sahin Y."/>
            <person name="Gezdirici A."/>
            <person name="Fatih J.M."/>
            <person name="Gulec E.Y."/>
            <person name="Yesil G."/>
            <person name="Punetha J."/>
            <person name="Ocak Z."/>
            <person name="Grochowski C.M."/>
            <person name="Karaca E."/>
            <person name="Albayrak H.M."/>
            <person name="Radhakrishnan P."/>
            <person name="Erdem H.B."/>
            <person name="Sahin I."/>
            <person name="Yildirim T."/>
            <person name="Bayhan I.A."/>
            <person name="Bursali A."/>
            <person name="Elmas M."/>
            <person name="Yuksel Z."/>
            <person name="Ozdemir O."/>
            <person name="Silan F."/>
            <person name="Yildiz O."/>
            <person name="Yesilbas O."/>
            <person name="Isikay S."/>
            <person name="Balta B."/>
            <person name="Gu S."/>
            <person name="Jhangiani S.N."/>
            <person name="Doddapaneni H."/>
            <person name="Hu J."/>
            <person name="Muzny D.M."/>
            <person name="Boerwinkle E."/>
            <person name="Gibbs R.A."/>
            <person name="Tsiakas K."/>
            <person name="Hempel M."/>
            <person name="Girisha K.M."/>
            <person name="Gul D."/>
            <person name="Posey J.E."/>
            <person name="Elcioglu N.H."/>
            <person name="Tuysuz B."/>
            <person name="Lupski J.R."/>
        </authorList>
    </citation>
    <scope>VARIANTS CMYO20 GLY-667 AND LEU-2980</scope>
    <scope>VARIANT HIS-829</scope>
    <scope>INVOLVEMENT IN CMYO20</scope>
</reference>
<comment type="function">
    <text evidence="3 9 13">Cytosolic calcium-activated calcium channel that mediates the release of Ca(2+) from the sarcoplasmic reticulum into the cytoplasm in muscle and thereby plays a role in triggering muscle contraction (PubMed:12354756, PubMed:9395096). May regulate Ca(2+) release by other calcium channels. Calcium channel that mediates Ca(2+)-induced Ca(2+) release from the endoplasmic reticulum in non-muscle cells. Contributes to cellular calcium ion homeostasis (By similarity). Plays a role in cellular calcium signaling.</text>
</comment>
<comment type="catalytic activity">
    <reaction evidence="9 13">
        <text>Ca(2+)(in) = Ca(2+)(out)</text>
        <dbReference type="Rhea" id="RHEA:29671"/>
        <dbReference type="ChEBI" id="CHEBI:29108"/>
    </reaction>
</comment>
<comment type="activity regulation">
    <text evidence="4">Channel activity is modulated by the alkaloid ryanodine that binds to the open calcium-release channel with high affinity. At low concentrations, ryanodine maintains the channel in an open conformation. High ryanodine concentrations inhibit channel activity. Channel activity is regulated by calmodulin (CALM). The calcium release is activated by elevated cytoplasmic calcium levels in the micromolar range, by caffeine and adenine nucleotides, such as AMP and ATP. Inhibited by Mg(2+) and ruthenium red.</text>
</comment>
<comment type="subunit">
    <text evidence="4 10">Homotetramer. Heterotetramer with RYR2. Interacts with CALM (By similarity). Interacts with FKBP1A. Interacts with SELENON (By similarity).</text>
</comment>
<comment type="subcellular location">
    <subcellularLocation>
        <location evidence="4">Sarcoplasmic reticulum membrane</location>
        <topology evidence="5">Multi-pass membrane protein</topology>
    </subcellularLocation>
</comment>
<comment type="alternative products">
    <event type="alternative splicing"/>
    <isoform>
        <id>Q15413-1</id>
        <name>1</name>
        <sequence type="displayed"/>
    </isoform>
    <isoform>
        <id>Q15413-2</id>
        <name>2</name>
        <sequence type="described" ref="VSP_005954"/>
    </isoform>
    <isoform>
        <id>Q15413-3</id>
        <name>3</name>
        <sequence type="described" ref="VSP_005955 VSP_005956"/>
    </isoform>
</comment>
<comment type="tissue specificity">
    <text evidence="13 15">Brain, skeletal muscle, placenta and possibly liver and kidney. In brain, highest levels are found in the cerebellum, hippocampus, caudate nucleus and amygdala, with lower levels in the corpus callosum, substantia nigra and thalamus.</text>
</comment>
<comment type="domain">
    <text evidence="2">The calcium release channel activity resides in the C-terminal region while the remaining part of the protein resides in the cytoplasm.</text>
</comment>
<comment type="disease" evidence="11 12">
    <disease id="DI-06640">
        <name>Congenital myopathy 20</name>
        <acronym>CMYO20</acronym>
        <description>An autosomal recessive neuromuscular disorder characterized by variable manifestations. Some patients have congenital limb or distal contractures manifesting soon after birth, while others develop muscle weakness with difficulty running and climbing stairs in early childhood. Additional features may include facial dysmorphism, and delayed development with intellectual disability. Skeletal muscle biopsy may show variation in fiber size with type 1 fiber predominance and atrophy, hypertrophic type 2 fibers, and abundant nemaline bodies.</description>
        <dbReference type="MIM" id="620310"/>
    </disease>
    <text>The disease may be caused by variants affecting the gene represented in this entry.</text>
</comment>
<comment type="similarity">
    <text evidence="17">Belongs to the ryanodine receptor (TC 1.A.3.1) family. RYR3 subfamily.</text>
</comment>
<comment type="sequence caution" evidence="17">
    <conflict type="frameshift">
        <sequence resource="EMBL-CDS" id="BAA23795"/>
    </conflict>
</comment>
<comment type="online information" name="Wikipedia">
    <link uri="https://en.wikipedia.org/wiki/Ryanodine_receptor"/>
    <text>Ryanodine receptor entry</text>
</comment>
<accession>Q15413</accession>
<accession>O15175</accession>
<accession>Q15412</accession>
<dbReference type="EMBL" id="AB001025">
    <property type="protein sequence ID" value="BAA23795.1"/>
    <property type="status" value="ALT_FRAME"/>
    <property type="molecule type" value="mRNA"/>
</dbReference>
<dbReference type="EMBL" id="AJ001515">
    <property type="protein sequence ID" value="CAA04798.1"/>
    <property type="molecule type" value="mRNA"/>
</dbReference>
<dbReference type="EMBL" id="AC010809">
    <property type="status" value="NOT_ANNOTATED_CDS"/>
    <property type="molecule type" value="Genomic_DNA"/>
</dbReference>
<dbReference type="EMBL" id="AC011938">
    <property type="status" value="NOT_ANNOTATED_CDS"/>
    <property type="molecule type" value="Genomic_DNA"/>
</dbReference>
<dbReference type="EMBL" id="AC055874">
    <property type="status" value="NOT_ANNOTATED_CDS"/>
    <property type="molecule type" value="Genomic_DNA"/>
</dbReference>
<dbReference type="EMBL" id="AC067793">
    <property type="status" value="NOT_ANNOTATED_CDS"/>
    <property type="molecule type" value="Genomic_DNA"/>
</dbReference>
<dbReference type="EMBL" id="AC087638">
    <property type="status" value="NOT_ANNOTATED_CDS"/>
    <property type="molecule type" value="Genomic_DNA"/>
</dbReference>
<dbReference type="EMBL" id="AJ002512">
    <property type="protein sequence ID" value="CAA05503.1"/>
    <property type="molecule type" value="mRNA"/>
</dbReference>
<dbReference type="EMBL" id="X74269">
    <property type="protein sequence ID" value="CAA52326.1"/>
    <property type="molecule type" value="mRNA"/>
</dbReference>
<dbReference type="EMBL" id="X74270">
    <property type="protein sequence ID" value="CAA52327.1"/>
    <property type="molecule type" value="Genomic_DNA"/>
</dbReference>
<dbReference type="CCDS" id="CCDS45210.1">
    <molecule id="Q15413-1"/>
</dbReference>
<dbReference type="CCDS" id="CCDS58351.1">
    <molecule id="Q15413-2"/>
</dbReference>
<dbReference type="PIR" id="S37537">
    <property type="entry name" value="S37537"/>
</dbReference>
<dbReference type="PIR" id="S66631">
    <property type="entry name" value="S66631"/>
</dbReference>
<dbReference type="RefSeq" id="NP_001027.3">
    <molecule id="Q15413-1"/>
    <property type="nucleotide sequence ID" value="NM_001036.4"/>
</dbReference>
<dbReference type="RefSeq" id="NP_001230925.1">
    <molecule id="Q15413-2"/>
    <property type="nucleotide sequence ID" value="NM_001243996.4"/>
</dbReference>
<dbReference type="PDB" id="4ERV">
    <property type="method" value="X-ray"/>
    <property type="resolution" value="1.75 A"/>
    <property type="chains" value="A=2597-2800"/>
</dbReference>
<dbReference type="PDB" id="6UHA">
    <property type="method" value="X-ray"/>
    <property type="resolution" value="2.85 A"/>
    <property type="chains" value="A/B=848-1055"/>
</dbReference>
<dbReference type="PDB" id="6UHB">
    <property type="method" value="X-ray"/>
    <property type="resolution" value="2.50 A"/>
    <property type="chains" value="A/B=848-1055"/>
</dbReference>
<dbReference type="PDB" id="6UHE">
    <property type="method" value="X-ray"/>
    <property type="resolution" value="2.89 A"/>
    <property type="chains" value="A/B/C/D=848-1055"/>
</dbReference>
<dbReference type="PDB" id="6UHH">
    <property type="method" value="X-ray"/>
    <property type="resolution" value="3.14 A"/>
    <property type="chains" value="A/B/C/D=848-1055"/>
</dbReference>
<dbReference type="PDBsum" id="4ERV"/>
<dbReference type="PDBsum" id="6UHA"/>
<dbReference type="PDBsum" id="6UHB"/>
<dbReference type="PDBsum" id="6UHE"/>
<dbReference type="PDBsum" id="6UHH"/>
<dbReference type="SMR" id="Q15413"/>
<dbReference type="BioGRID" id="112175">
    <property type="interactions" value="23"/>
</dbReference>
<dbReference type="ComplexPortal" id="CPX-3162">
    <property type="entry name" value="Ryanodine 3 complex"/>
</dbReference>
<dbReference type="FunCoup" id="Q15413">
    <property type="interactions" value="1308"/>
</dbReference>
<dbReference type="IntAct" id="Q15413">
    <property type="interactions" value="8"/>
</dbReference>
<dbReference type="STRING" id="9606.ENSP00000489262"/>
<dbReference type="ChEMBL" id="CHEMBL2062"/>
<dbReference type="DrugBank" id="DB11093">
    <property type="generic name" value="Calcium citrate"/>
</dbReference>
<dbReference type="DrugBank" id="DB11348">
    <property type="generic name" value="Calcium Phosphate"/>
</dbReference>
<dbReference type="DrugBank" id="DB14481">
    <property type="generic name" value="Calcium phosphate dihydrate"/>
</dbReference>
<dbReference type="DrugCentral" id="Q15413"/>
<dbReference type="GlyCosmos" id="Q15413">
    <property type="glycosylation" value="2 sites, 1 glycan"/>
</dbReference>
<dbReference type="GlyGen" id="Q15413">
    <property type="glycosylation" value="10 sites, 1 O-linked glycan (10 sites)"/>
</dbReference>
<dbReference type="iPTMnet" id="Q15413"/>
<dbReference type="PhosphoSitePlus" id="Q15413"/>
<dbReference type="SwissPalm" id="Q15413"/>
<dbReference type="BioMuta" id="RYR3"/>
<dbReference type="DMDM" id="325511382"/>
<dbReference type="jPOST" id="Q15413"/>
<dbReference type="MassIVE" id="Q15413"/>
<dbReference type="PaxDb" id="9606-ENSP00000373884"/>
<dbReference type="PeptideAtlas" id="Q15413"/>
<dbReference type="ProteomicsDB" id="60577">
    <molecule id="Q15413-1"/>
</dbReference>
<dbReference type="ProteomicsDB" id="60578">
    <molecule id="Q15413-2"/>
</dbReference>
<dbReference type="ProteomicsDB" id="60579">
    <molecule id="Q15413-3"/>
</dbReference>
<dbReference type="Antibodypedia" id="41923">
    <property type="antibodies" value="41 antibodies from 16 providers"/>
</dbReference>
<dbReference type="DNASU" id="6263"/>
<dbReference type="Ensembl" id="ENST00000415757.7">
    <molecule id="Q15413-2"/>
    <property type="protein sequence ID" value="ENSP00000399610.3"/>
    <property type="gene ID" value="ENSG00000198838.15"/>
</dbReference>
<dbReference type="Ensembl" id="ENST00000634891.2">
    <molecule id="Q15413-1"/>
    <property type="protein sequence ID" value="ENSP00000489262.1"/>
    <property type="gene ID" value="ENSG00000198838.15"/>
</dbReference>
<dbReference type="GeneID" id="6263"/>
<dbReference type="KEGG" id="hsa:6263"/>
<dbReference type="MANE-Select" id="ENST00000634891.2">
    <property type="protein sequence ID" value="ENSP00000489262.1"/>
    <property type="RefSeq nucleotide sequence ID" value="NM_001036.6"/>
    <property type="RefSeq protein sequence ID" value="NP_001027.3"/>
</dbReference>
<dbReference type="UCSC" id="uc001zhi.3">
    <molecule id="Q15413-1"/>
    <property type="organism name" value="human"/>
</dbReference>
<dbReference type="AGR" id="HGNC:10485"/>
<dbReference type="CTD" id="6263"/>
<dbReference type="DisGeNET" id="6263"/>
<dbReference type="GeneCards" id="RYR3"/>
<dbReference type="HGNC" id="HGNC:10485">
    <property type="gene designation" value="RYR3"/>
</dbReference>
<dbReference type="HPA" id="ENSG00000198838">
    <property type="expression patterns" value="Tissue enhanced (brain, choroid plexus, skeletal muscle, tongue)"/>
</dbReference>
<dbReference type="MalaCards" id="RYR3"/>
<dbReference type="MIM" id="180903">
    <property type="type" value="gene"/>
</dbReference>
<dbReference type="MIM" id="620310">
    <property type="type" value="phenotype"/>
</dbReference>
<dbReference type="neXtProt" id="NX_Q15413"/>
<dbReference type="OpenTargets" id="ENSG00000198838"/>
<dbReference type="PharmGKB" id="PA34897"/>
<dbReference type="VEuPathDB" id="HostDB:ENSG00000198838"/>
<dbReference type="eggNOG" id="KOG2243">
    <property type="taxonomic scope" value="Eukaryota"/>
</dbReference>
<dbReference type="GeneTree" id="ENSGT00940000155507"/>
<dbReference type="HOGENOM" id="CLU_000040_2_0_1"/>
<dbReference type="InParanoid" id="Q15413"/>
<dbReference type="OMA" id="TCMSEFI"/>
<dbReference type="OrthoDB" id="300855at2759"/>
<dbReference type="PAN-GO" id="Q15413">
    <property type="GO annotations" value="10 GO annotations based on evolutionary models"/>
</dbReference>
<dbReference type="PhylomeDB" id="Q15413"/>
<dbReference type="TreeFam" id="TF315244"/>
<dbReference type="PathwayCommons" id="Q15413"/>
<dbReference type="Reactome" id="R-HSA-2672351">
    <property type="pathway name" value="Stimuli-sensing channels"/>
</dbReference>
<dbReference type="Reactome" id="R-HSA-5578775">
    <property type="pathway name" value="Ion homeostasis"/>
</dbReference>
<dbReference type="SignaLink" id="Q15413"/>
<dbReference type="BioGRID-ORCS" id="6263">
    <property type="hits" value="16 hits in 1150 CRISPR screens"/>
</dbReference>
<dbReference type="ChiTaRS" id="RYR3">
    <property type="organism name" value="human"/>
</dbReference>
<dbReference type="EvolutionaryTrace" id="Q15413"/>
<dbReference type="GeneWiki" id="RYR3"/>
<dbReference type="GenomeRNAi" id="6263"/>
<dbReference type="Pharos" id="Q15413">
    <property type="development level" value="Tclin"/>
</dbReference>
<dbReference type="PRO" id="PR:Q15413"/>
<dbReference type="Proteomes" id="UP000005640">
    <property type="component" value="Chromosome 15"/>
</dbReference>
<dbReference type="RNAct" id="Q15413">
    <property type="molecule type" value="protein"/>
</dbReference>
<dbReference type="Bgee" id="ENSG00000198838">
    <property type="expression patterns" value="Expressed in diaphragm and 148 other cell types or tissues"/>
</dbReference>
<dbReference type="ExpressionAtlas" id="Q15413">
    <property type="expression patterns" value="baseline and differential"/>
</dbReference>
<dbReference type="GO" id="GO:0034704">
    <property type="term" value="C:calcium channel complex"/>
    <property type="evidence" value="ECO:0000318"/>
    <property type="project" value="GO_Central"/>
</dbReference>
<dbReference type="GO" id="GO:0016020">
    <property type="term" value="C:membrane"/>
    <property type="evidence" value="ECO:0000250"/>
    <property type="project" value="UniProtKB"/>
</dbReference>
<dbReference type="GO" id="GO:0042383">
    <property type="term" value="C:sarcolemma"/>
    <property type="evidence" value="ECO:0000318"/>
    <property type="project" value="GO_Central"/>
</dbReference>
<dbReference type="GO" id="GO:0033017">
    <property type="term" value="C:sarcoplasmic reticulum membrane"/>
    <property type="evidence" value="ECO:0000250"/>
    <property type="project" value="UniProtKB"/>
</dbReference>
<dbReference type="GO" id="GO:0005790">
    <property type="term" value="C:smooth endoplasmic reticulum"/>
    <property type="evidence" value="ECO:0000318"/>
    <property type="project" value="GO_Central"/>
</dbReference>
<dbReference type="GO" id="GO:0030018">
    <property type="term" value="C:Z disc"/>
    <property type="evidence" value="ECO:0000318"/>
    <property type="project" value="GO_Central"/>
</dbReference>
<dbReference type="GO" id="GO:0005509">
    <property type="term" value="F:calcium ion binding"/>
    <property type="evidence" value="ECO:0007669"/>
    <property type="project" value="InterPro"/>
</dbReference>
<dbReference type="GO" id="GO:0048763">
    <property type="term" value="F:calcium-induced calcium release activity"/>
    <property type="evidence" value="ECO:0000250"/>
    <property type="project" value="UniProtKB"/>
</dbReference>
<dbReference type="GO" id="GO:0005516">
    <property type="term" value="F:calmodulin binding"/>
    <property type="evidence" value="ECO:0007669"/>
    <property type="project" value="UniProtKB-KW"/>
</dbReference>
<dbReference type="GO" id="GO:0015278">
    <property type="term" value="F:intracellularly gated calcium channel activity"/>
    <property type="evidence" value="ECO:0000315"/>
    <property type="project" value="UniProtKB"/>
</dbReference>
<dbReference type="GO" id="GO:0005219">
    <property type="term" value="F:ryanodine-sensitive calcium-release channel activity"/>
    <property type="evidence" value="ECO:0000250"/>
    <property type="project" value="UniProtKB"/>
</dbReference>
<dbReference type="GO" id="GO:0070588">
    <property type="term" value="P:calcium ion transmembrane transport"/>
    <property type="evidence" value="ECO:0000250"/>
    <property type="project" value="UniProtKB"/>
</dbReference>
<dbReference type="GO" id="GO:0006816">
    <property type="term" value="P:calcium ion transport"/>
    <property type="evidence" value="ECO:0000315"/>
    <property type="project" value="UniProtKB"/>
</dbReference>
<dbReference type="GO" id="GO:0071318">
    <property type="term" value="P:cellular response to ATP"/>
    <property type="evidence" value="ECO:0000250"/>
    <property type="project" value="UniProtKB"/>
</dbReference>
<dbReference type="GO" id="GO:0071313">
    <property type="term" value="P:cellular response to caffeine"/>
    <property type="evidence" value="ECO:0000250"/>
    <property type="project" value="UniProtKB"/>
</dbReference>
<dbReference type="GO" id="GO:0071277">
    <property type="term" value="P:cellular response to calcium ion"/>
    <property type="evidence" value="ECO:0000250"/>
    <property type="project" value="UniProtKB"/>
</dbReference>
<dbReference type="GO" id="GO:0071286">
    <property type="term" value="P:cellular response to magnesium ion"/>
    <property type="evidence" value="ECO:0000250"/>
    <property type="project" value="UniProtKB"/>
</dbReference>
<dbReference type="GO" id="GO:0006874">
    <property type="term" value="P:intracellular calcium ion homeostasis"/>
    <property type="evidence" value="ECO:0007669"/>
    <property type="project" value="InterPro"/>
</dbReference>
<dbReference type="GO" id="GO:0051289">
    <property type="term" value="P:protein homotetramerization"/>
    <property type="evidence" value="ECO:0000250"/>
    <property type="project" value="UniProtKB"/>
</dbReference>
<dbReference type="GO" id="GO:0051209">
    <property type="term" value="P:release of sequestered calcium ion into cytosol"/>
    <property type="evidence" value="ECO:0000250"/>
    <property type="project" value="UniProtKB"/>
</dbReference>
<dbReference type="GO" id="GO:0014808">
    <property type="term" value="P:release of sequestered calcium ion into cytosol by sarcoplasmic reticulum"/>
    <property type="evidence" value="ECO:0000318"/>
    <property type="project" value="GO_Central"/>
</dbReference>
<dbReference type="CDD" id="cd23292">
    <property type="entry name" value="beta-trefoil_MIR_RyR3"/>
    <property type="match status" value="1"/>
</dbReference>
<dbReference type="CDD" id="cd12877">
    <property type="entry name" value="SPRY1_RyR"/>
    <property type="match status" value="1"/>
</dbReference>
<dbReference type="CDD" id="cd12878">
    <property type="entry name" value="SPRY2_RyR"/>
    <property type="match status" value="1"/>
</dbReference>
<dbReference type="CDD" id="cd12879">
    <property type="entry name" value="SPRY3_RyR"/>
    <property type="match status" value="1"/>
</dbReference>
<dbReference type="FunFam" id="2.80.10.50:FF:000009">
    <property type="entry name" value="Ryanodine receptor 1 (skeletal)"/>
    <property type="match status" value="1"/>
</dbReference>
<dbReference type="FunFam" id="1.10.238.10:FF:000040">
    <property type="entry name" value="Ryanodine receptor 2"/>
    <property type="match status" value="1"/>
</dbReference>
<dbReference type="FunFam" id="1.10.490.160:FF:000001">
    <property type="entry name" value="Ryanodine receptor 2 (Cardiac)"/>
    <property type="match status" value="1"/>
</dbReference>
<dbReference type="FunFam" id="2.80.10.50:FF:000006">
    <property type="entry name" value="Ryanodine receptor 2 (Cardiac)"/>
    <property type="match status" value="1"/>
</dbReference>
<dbReference type="FunFam" id="2.60.120.920:FF:000024">
    <property type="entry name" value="Ryanodine receptor 3"/>
    <property type="match status" value="1"/>
</dbReference>
<dbReference type="FunFam" id="1.10.287.70:FF:000017">
    <property type="entry name" value="ryanodine receptor isoform X2"/>
    <property type="match status" value="1"/>
</dbReference>
<dbReference type="FunFam" id="1.25.10.30:FF:000002">
    <property type="entry name" value="ryanodine receptor isoform X2"/>
    <property type="match status" value="1"/>
</dbReference>
<dbReference type="FunFam" id="2.60.120.920:FF:000002">
    <property type="entry name" value="ryanodine receptor isoform X2"/>
    <property type="match status" value="1"/>
</dbReference>
<dbReference type="FunFam" id="2.60.120.920:FF:000003">
    <property type="entry name" value="ryanodine receptor isoform X2"/>
    <property type="match status" value="1"/>
</dbReference>
<dbReference type="Gene3D" id="1.10.287.70">
    <property type="match status" value="1"/>
</dbReference>
<dbReference type="Gene3D" id="1.10.490.160">
    <property type="match status" value="2"/>
</dbReference>
<dbReference type="Gene3D" id="2.60.120.920">
    <property type="match status" value="3"/>
</dbReference>
<dbReference type="Gene3D" id="2.80.10.50">
    <property type="match status" value="2"/>
</dbReference>
<dbReference type="Gene3D" id="6.20.350.10">
    <property type="match status" value="1"/>
</dbReference>
<dbReference type="Gene3D" id="1.10.238.10">
    <property type="entry name" value="EF-hand"/>
    <property type="match status" value="1"/>
</dbReference>
<dbReference type="Gene3D" id="1.25.10.30">
    <property type="entry name" value="IP3 receptor type 1 binding core, RIH domain"/>
    <property type="match status" value="1"/>
</dbReference>
<dbReference type="InterPro" id="IPR016024">
    <property type="entry name" value="ARM-type_fold"/>
</dbReference>
<dbReference type="InterPro" id="IPR001870">
    <property type="entry name" value="B30.2/SPRY"/>
</dbReference>
<dbReference type="InterPro" id="IPR043136">
    <property type="entry name" value="B30.2/SPRY_sf"/>
</dbReference>
<dbReference type="InterPro" id="IPR013320">
    <property type="entry name" value="ConA-like_dom_sf"/>
</dbReference>
<dbReference type="InterPro" id="IPR011992">
    <property type="entry name" value="EF-hand-dom_pair"/>
</dbReference>
<dbReference type="InterPro" id="IPR002048">
    <property type="entry name" value="EF_hand_dom"/>
</dbReference>
<dbReference type="InterPro" id="IPR014821">
    <property type="entry name" value="Ins145_P3_rcpt"/>
</dbReference>
<dbReference type="InterPro" id="IPR005821">
    <property type="entry name" value="Ion_trans_dom"/>
</dbReference>
<dbReference type="InterPro" id="IPR036300">
    <property type="entry name" value="MIR_dom_sf"/>
</dbReference>
<dbReference type="InterPro" id="IPR016093">
    <property type="entry name" value="MIR_motif"/>
</dbReference>
<dbReference type="InterPro" id="IPR013662">
    <property type="entry name" value="RIH_assoc-dom"/>
</dbReference>
<dbReference type="InterPro" id="IPR000699">
    <property type="entry name" value="RIH_dom"/>
</dbReference>
<dbReference type="InterPro" id="IPR013333">
    <property type="entry name" value="Ryan_recept"/>
</dbReference>
<dbReference type="InterPro" id="IPR015925">
    <property type="entry name" value="Ryanodine_IP3_receptor"/>
</dbReference>
<dbReference type="InterPro" id="IPR003032">
    <property type="entry name" value="Ryanodine_rcpt"/>
</dbReference>
<dbReference type="InterPro" id="IPR009460">
    <property type="entry name" value="Ryanrecept_TM4-6"/>
</dbReference>
<dbReference type="InterPro" id="IPR048581">
    <property type="entry name" value="RYDR_Jsol"/>
</dbReference>
<dbReference type="InterPro" id="IPR035910">
    <property type="entry name" value="RyR/IP3R_RIH_dom_sf"/>
</dbReference>
<dbReference type="InterPro" id="IPR035761">
    <property type="entry name" value="SPRY1_RyR"/>
</dbReference>
<dbReference type="InterPro" id="IPR035764">
    <property type="entry name" value="SPRY2_RyR"/>
</dbReference>
<dbReference type="InterPro" id="IPR035762">
    <property type="entry name" value="SPRY3_RyR"/>
</dbReference>
<dbReference type="InterPro" id="IPR003877">
    <property type="entry name" value="SPRY_dom"/>
</dbReference>
<dbReference type="PANTHER" id="PTHR46399">
    <property type="entry name" value="B30.2/SPRY DOMAIN-CONTAINING PROTEIN"/>
    <property type="match status" value="1"/>
</dbReference>
<dbReference type="PANTHER" id="PTHR46399:SF9">
    <property type="entry name" value="RYANODINE RECEPTOR 3"/>
    <property type="match status" value="1"/>
</dbReference>
<dbReference type="Pfam" id="PF08709">
    <property type="entry name" value="Ins145_P3_rec"/>
    <property type="match status" value="1"/>
</dbReference>
<dbReference type="Pfam" id="PF00520">
    <property type="entry name" value="Ion_trans"/>
    <property type="match status" value="1"/>
</dbReference>
<dbReference type="Pfam" id="PF02815">
    <property type="entry name" value="MIR"/>
    <property type="match status" value="1"/>
</dbReference>
<dbReference type="Pfam" id="PF08454">
    <property type="entry name" value="RIH_assoc"/>
    <property type="match status" value="1"/>
</dbReference>
<dbReference type="Pfam" id="PF06459">
    <property type="entry name" value="RR_TM4-6"/>
    <property type="match status" value="1"/>
</dbReference>
<dbReference type="Pfam" id="PF01365">
    <property type="entry name" value="RYDR_ITPR"/>
    <property type="match status" value="2"/>
</dbReference>
<dbReference type="Pfam" id="PF21119">
    <property type="entry name" value="RYDR_Jsol"/>
    <property type="match status" value="1"/>
</dbReference>
<dbReference type="Pfam" id="PF02026">
    <property type="entry name" value="RyR"/>
    <property type="match status" value="4"/>
</dbReference>
<dbReference type="Pfam" id="PF00622">
    <property type="entry name" value="SPRY"/>
    <property type="match status" value="3"/>
</dbReference>
<dbReference type="PRINTS" id="PR00795">
    <property type="entry name" value="RYANODINER"/>
</dbReference>
<dbReference type="SMART" id="SM00472">
    <property type="entry name" value="MIR"/>
    <property type="match status" value="4"/>
</dbReference>
<dbReference type="SMART" id="SM00449">
    <property type="entry name" value="SPRY"/>
    <property type="match status" value="3"/>
</dbReference>
<dbReference type="SUPFAM" id="SSF48371">
    <property type="entry name" value="ARM repeat"/>
    <property type="match status" value="1"/>
</dbReference>
<dbReference type="SUPFAM" id="SSF49899">
    <property type="entry name" value="Concanavalin A-like lectins/glucanases"/>
    <property type="match status" value="3"/>
</dbReference>
<dbReference type="SUPFAM" id="SSF47473">
    <property type="entry name" value="EF-hand"/>
    <property type="match status" value="1"/>
</dbReference>
<dbReference type="SUPFAM" id="SSF100909">
    <property type="entry name" value="IP3 receptor type 1 binding core, domain 2"/>
    <property type="match status" value="1"/>
</dbReference>
<dbReference type="SUPFAM" id="SSF82109">
    <property type="entry name" value="MIR domain"/>
    <property type="match status" value="2"/>
</dbReference>
<dbReference type="PROSITE" id="PS50188">
    <property type="entry name" value="B302_SPRY"/>
    <property type="match status" value="3"/>
</dbReference>
<dbReference type="PROSITE" id="PS50919">
    <property type="entry name" value="MIR"/>
    <property type="match status" value="5"/>
</dbReference>
<keyword id="KW-0002">3D-structure</keyword>
<keyword id="KW-0025">Alternative splicing</keyword>
<keyword id="KW-0106">Calcium</keyword>
<keyword id="KW-0107">Calcium channel</keyword>
<keyword id="KW-0109">Calcium transport</keyword>
<keyword id="KW-0112">Calmodulin-binding</keyword>
<keyword id="KW-0407">Ion channel</keyword>
<keyword id="KW-0406">Ion transport</keyword>
<keyword id="KW-1071">Ligand-gated ion channel</keyword>
<keyword id="KW-0472">Membrane</keyword>
<keyword id="KW-1267">Proteomics identification</keyword>
<keyword id="KW-0675">Receptor</keyword>
<keyword id="KW-1185">Reference proteome</keyword>
<keyword id="KW-0677">Repeat</keyword>
<keyword id="KW-0703">Sarcoplasmic reticulum</keyword>
<keyword id="KW-0812">Transmembrane</keyword>
<keyword id="KW-1133">Transmembrane helix</keyword>
<keyword id="KW-0813">Transport</keyword>
<protein>
    <recommendedName>
        <fullName evidence="18">Ryanodine receptor 3</fullName>
        <shortName>RYR-3</shortName>
        <shortName>RyR3</shortName>
    </recommendedName>
    <alternativeName>
        <fullName>Brain ryanodine receptor-calcium release channel</fullName>
    </alternativeName>
    <alternativeName>
        <fullName>Brain-type ryanodine receptor</fullName>
    </alternativeName>
    <alternativeName>
        <fullName>Type 3 ryanodine receptor</fullName>
    </alternativeName>
</protein>
<evidence type="ECO:0000250" key="1"/>
<evidence type="ECO:0000250" key="2">
    <source>
        <dbReference type="UniProtKB" id="P11716"/>
    </source>
</evidence>
<evidence type="ECO:0000250" key="3">
    <source>
        <dbReference type="UniProtKB" id="Q92736"/>
    </source>
</evidence>
<evidence type="ECO:0000250" key="4">
    <source>
        <dbReference type="UniProtKB" id="Q9TS33"/>
    </source>
</evidence>
<evidence type="ECO:0000255" key="5"/>
<evidence type="ECO:0000255" key="6">
    <source>
        <dbReference type="PROSITE-ProRule" id="PRU00131"/>
    </source>
</evidence>
<evidence type="ECO:0000255" key="7">
    <source>
        <dbReference type="PROSITE-ProRule" id="PRU00548"/>
    </source>
</evidence>
<evidence type="ECO:0000256" key="8">
    <source>
        <dbReference type="SAM" id="MobiDB-lite"/>
    </source>
</evidence>
<evidence type="ECO:0000269" key="9">
    <source>
    </source>
</evidence>
<evidence type="ECO:0000269" key="10">
    <source>
    </source>
</evidence>
<evidence type="ECO:0000269" key="11">
    <source>
    </source>
</evidence>
<evidence type="ECO:0000269" key="12">
    <source>
    </source>
</evidence>
<evidence type="ECO:0000269" key="13">
    <source>
    </source>
</evidence>
<evidence type="ECO:0000269" key="14">
    <source>
    </source>
</evidence>
<evidence type="ECO:0000269" key="15">
    <source>
    </source>
</evidence>
<evidence type="ECO:0000303" key="16">
    <source>
    </source>
</evidence>
<evidence type="ECO:0000305" key="17"/>
<evidence type="ECO:0000305" key="18">
    <source>
    </source>
</evidence>
<evidence type="ECO:0000312" key="19">
    <source>
        <dbReference type="HGNC" id="HGNC:10485"/>
    </source>
</evidence>
<evidence type="ECO:0007744" key="20">
    <source>
        <dbReference type="PDB" id="4ERV"/>
    </source>
</evidence>
<evidence type="ECO:0007829" key="21">
    <source>
        <dbReference type="PDB" id="4ERV"/>
    </source>
</evidence>
<evidence type="ECO:0007829" key="22">
    <source>
        <dbReference type="PDB" id="6UHB"/>
    </source>
</evidence>
<feature type="chain" id="PRO_0000219363" description="Ryanodine receptor 3">
    <location>
        <begin position="1"/>
        <end position="4870"/>
    </location>
</feature>
<feature type="topological domain" description="Cytoplasmic" evidence="1">
    <location>
        <begin position="1"/>
        <end position="4186"/>
    </location>
</feature>
<feature type="transmembrane region" description="Helical" evidence="5">
    <location>
        <begin position="4187"/>
        <end position="4207"/>
    </location>
</feature>
<feature type="transmembrane region" description="Helical" evidence="5">
    <location>
        <begin position="4410"/>
        <end position="4430"/>
    </location>
</feature>
<feature type="transmembrane region" description="Helical" evidence="5">
    <location>
        <begin position="4485"/>
        <end position="4505"/>
    </location>
</feature>
<feature type="transmembrane region" description="Helical" evidence="5">
    <location>
        <begin position="4610"/>
        <end position="4630"/>
    </location>
</feature>
<feature type="transmembrane region" description="Helical" evidence="5">
    <location>
        <begin position="4633"/>
        <end position="4653"/>
    </location>
</feature>
<feature type="transmembrane region" description="Helical" evidence="5">
    <location>
        <begin position="4672"/>
        <end position="4692"/>
    </location>
</feature>
<feature type="intramembrane region" description="Pore-forming" evidence="1">
    <location>
        <begin position="4723"/>
        <end position="4732"/>
    </location>
</feature>
<feature type="transmembrane region" description="Helical" evidence="5">
    <location>
        <begin position="4753"/>
        <end position="4773"/>
    </location>
</feature>
<feature type="topological domain" description="Cytoplasmic" evidence="1">
    <location>
        <begin position="4774"/>
        <end position="4870"/>
    </location>
</feature>
<feature type="domain" description="MIR 1" evidence="6">
    <location>
        <begin position="100"/>
        <end position="155"/>
    </location>
</feature>
<feature type="domain" description="MIR 2" evidence="6">
    <location>
        <begin position="162"/>
        <end position="207"/>
    </location>
</feature>
<feature type="domain" description="MIR 3" evidence="6">
    <location>
        <begin position="215"/>
        <end position="269"/>
    </location>
</feature>
<feature type="domain" description="MIR 4" evidence="6">
    <location>
        <begin position="275"/>
        <end position="333"/>
    </location>
</feature>
<feature type="domain" description="MIR 5" evidence="6">
    <location>
        <begin position="343"/>
        <end position="400"/>
    </location>
</feature>
<feature type="domain" description="B30.2/SPRY 1" evidence="7">
    <location>
        <begin position="585"/>
        <end position="796"/>
    </location>
</feature>
<feature type="repeat" description="1">
    <location>
        <begin position="840"/>
        <end position="953"/>
    </location>
</feature>
<feature type="repeat" description="2">
    <location>
        <begin position="954"/>
        <end position="1068"/>
    </location>
</feature>
<feature type="domain" description="B30.2/SPRY 2" evidence="7">
    <location>
        <begin position="1012"/>
        <end position="1208"/>
    </location>
</feature>
<feature type="domain" description="B30.2/SPRY 3" evidence="7">
    <location>
        <begin position="1254"/>
        <end position="1466"/>
    </location>
</feature>
<feature type="repeat" description="3">
    <location>
        <begin position="2589"/>
        <end position="2707"/>
    </location>
</feature>
<feature type="repeat" description="4">
    <location>
        <begin position="2708"/>
        <end position="2820"/>
    </location>
</feature>
<feature type="region of interest" description="4 X approximate repeats">
    <location>
        <begin position="840"/>
        <end position="2820"/>
    </location>
</feature>
<feature type="region of interest" description="Interaction with FKBP1A" evidence="10">
    <location>
        <begin position="2322"/>
        <end position="2335"/>
    </location>
</feature>
<feature type="region of interest" description="Interaction with CALM" evidence="1">
    <location>
        <begin position="3469"/>
        <end position="3498"/>
    </location>
</feature>
<feature type="region of interest" description="Disordered" evidence="8">
    <location>
        <begin position="4102"/>
        <end position="4121"/>
    </location>
</feature>
<feature type="region of interest" description="Disordered" evidence="8">
    <location>
        <begin position="4304"/>
        <end position="4360"/>
    </location>
</feature>
<feature type="compositionally biased region" description="Acidic residues" evidence="8">
    <location>
        <begin position="4111"/>
        <end position="4120"/>
    </location>
</feature>
<feature type="compositionally biased region" description="Basic and acidic residues" evidence="8">
    <location>
        <begin position="4332"/>
        <end position="4355"/>
    </location>
</feature>
<feature type="site" description="Important for activation by Ca(2+)" evidence="1">
    <location>
        <position position="3883"/>
    </location>
</feature>
<feature type="splice variant" id="VSP_005954" description="In isoform 2." evidence="16">
    <location>
        <begin position="3337"/>
        <end position="3341"/>
    </location>
</feature>
<feature type="splice variant" id="VSP_005955" description="In isoform 3." evidence="17">
    <original>DSS</original>
    <variation>GMW</variation>
    <location>
        <begin position="3857"/>
        <end position="3859"/>
    </location>
</feature>
<feature type="splice variant" id="VSP_005956" description="In isoform 3." evidence="17">
    <location>
        <begin position="3860"/>
        <end position="4870"/>
    </location>
</feature>
<feature type="sequence variant" id="VAR_024077" evidence="14">
    <original>R</original>
    <variation>S</variation>
    <location>
        <position position="261"/>
    </location>
</feature>
<feature type="sequence variant" id="VAR_057166" description="In dbSNP:rs2304380.">
    <original>I</original>
    <variation>T</variation>
    <location>
        <position position="358"/>
    </location>
</feature>
<feature type="sequence variant" id="VAR_024078" description="In dbSNP:rs2077268." evidence="14">
    <original>V</original>
    <variation>I</variation>
    <location>
        <position position="494"/>
    </location>
</feature>
<feature type="sequence variant" id="VAR_088349" description="In CMYO20; uncertain significance; dbSNP:rs1314283337." evidence="12">
    <original>D</original>
    <variation>G</variation>
    <location>
        <position position="667"/>
    </location>
</feature>
<feature type="sequence variant" id="VAR_011404" evidence="14">
    <original>Y</original>
    <variation>C</variation>
    <location>
        <position position="693"/>
    </location>
</feature>
<feature type="sequence variant" id="VAR_011405" description="In dbSNP:rs2229116." evidence="14">
    <original>I</original>
    <variation>V</variation>
    <location>
        <position position="731"/>
    </location>
</feature>
<feature type="sequence variant" id="VAR_088350" description="In dbSNP:rs199500216." evidence="12">
    <original>R</original>
    <variation>H</variation>
    <location>
        <position position="829"/>
    </location>
</feature>
<feature type="sequence variant" id="VAR_011406" evidence="14">
    <original>E</original>
    <variation>G</variation>
    <location>
        <position position="1380"/>
    </location>
</feature>
<feature type="sequence variant" id="VAR_088351" description="In CMYO20; uncertain significance; dbSNP:rs769938343." evidence="11">
    <original>M</original>
    <variation>V</variation>
    <location>
        <position position="2070"/>
    </location>
</feature>
<feature type="sequence variant" id="VAR_011407" evidence="14">
    <location>
        <position position="2268"/>
    </location>
</feature>
<feature type="sequence variant" id="VAR_088352" description="In CMYO20; uncertain significance; dbSNP:rs200346049." evidence="11 12">
    <original>R</original>
    <variation>L</variation>
    <location>
        <position position="2980"/>
    </location>
</feature>
<feature type="sequence conflict" description="In Ref. 1; BAA23795." evidence="17" ref="1">
    <original>A</original>
    <variation>T</variation>
    <location>
        <position position="932"/>
    </location>
</feature>
<feature type="sequence conflict" description="In Ref. 1; BAA23795." evidence="17" ref="1">
    <original>A</original>
    <variation>P</variation>
    <location>
        <position position="1081"/>
    </location>
</feature>
<feature type="sequence conflict" description="In Ref. 1; BAA23795." evidence="17" ref="1">
    <original>A</original>
    <variation>G</variation>
    <location>
        <position position="1336"/>
    </location>
</feature>
<feature type="sequence conflict" description="In Ref. 1; BAA23795." evidence="17" ref="1">
    <original>K</original>
    <variation>E</variation>
    <location>
        <position position="1480"/>
    </location>
</feature>
<feature type="sequence conflict" description="In Ref. 1; BAA23795 and 2; CAA04798." evidence="17" ref="1 2">
    <original>R</original>
    <variation>C</variation>
    <location>
        <position position="1641"/>
    </location>
</feature>
<feature type="sequence conflict" description="In Ref. 1; BAA23795 and 2; CAA04798." evidence="17" ref="1 2">
    <original>G</original>
    <variation>E</variation>
    <location>
        <position position="2270"/>
    </location>
</feature>
<feature type="sequence conflict" description="In Ref. 1; BAA23795." evidence="17" ref="1">
    <original>A</original>
    <variation>G</variation>
    <location>
        <position position="2355"/>
    </location>
</feature>
<feature type="sequence conflict" description="In Ref. 1; BAA23795." evidence="17" ref="1">
    <original>A</original>
    <variation>G</variation>
    <location>
        <position position="2433"/>
    </location>
</feature>
<feature type="sequence conflict" description="In Ref. 1; BAA23795." evidence="17" ref="1">
    <original>F</original>
    <variation>I</variation>
    <location>
        <position position="2546"/>
    </location>
</feature>
<feature type="sequence conflict" description="In Ref. 1; BAA23795." evidence="17" ref="1">
    <original>T</original>
    <variation>S</variation>
    <location>
        <position position="2580"/>
    </location>
</feature>
<feature type="sequence conflict" description="In Ref. 1; BAA23795." evidence="17" ref="1">
    <original>A</original>
    <variation>G</variation>
    <location>
        <position position="2817"/>
    </location>
</feature>
<feature type="sequence conflict" description="In Ref. 1; BAA23795." evidence="17" ref="1">
    <original>S</original>
    <variation>P</variation>
    <location>
        <position position="3684"/>
    </location>
</feature>
<feature type="sequence conflict" description="In Ref. 1; BAA23795." evidence="17" ref="1">
    <original>F</original>
    <variation>S</variation>
    <location>
        <position position="3698"/>
    </location>
</feature>
<feature type="sequence conflict" description="In Ref. 1; BAA23795." evidence="17" ref="1">
    <original>E</original>
    <variation>G</variation>
    <location>
        <position position="4026"/>
    </location>
</feature>
<feature type="sequence conflict" description="In Ref. 1; BAA23795." evidence="17" ref="1">
    <original>E</original>
    <variation>G</variation>
    <location>
        <position position="4083"/>
    </location>
</feature>
<feature type="sequence conflict" description="In Ref. 1; BAA23795." evidence="17" ref="1">
    <original>R</original>
    <variation>P</variation>
    <location>
        <position position="4537"/>
    </location>
</feature>
<feature type="sequence conflict" description="In Ref. 1; BAA23795." evidence="17" ref="1">
    <original>I</original>
    <variation>L</variation>
    <location>
        <position position="4604"/>
    </location>
</feature>
<feature type="sequence conflict" description="In Ref. 6; CAA52326." evidence="17" ref="6">
    <original>C</original>
    <variation>R</variation>
    <location>
        <position position="4709"/>
    </location>
</feature>
<feature type="helix" evidence="22">
    <location>
        <begin position="863"/>
        <end position="865"/>
    </location>
</feature>
<feature type="helix" evidence="22">
    <location>
        <begin position="866"/>
        <end position="886"/>
    </location>
</feature>
<feature type="turn" evidence="22">
    <location>
        <begin position="897"/>
        <end position="900"/>
    </location>
</feature>
<feature type="helix" evidence="22">
    <location>
        <begin position="908"/>
        <end position="910"/>
    </location>
</feature>
<feature type="helix" evidence="22">
    <location>
        <begin position="913"/>
        <end position="932"/>
    </location>
</feature>
<feature type="strand" evidence="22">
    <location>
        <begin position="936"/>
        <end position="938"/>
    </location>
</feature>
<feature type="helix" evidence="22">
    <location>
        <begin position="944"/>
        <end position="947"/>
    </location>
</feature>
<feature type="helix" evidence="22">
    <location>
        <begin position="955"/>
        <end position="957"/>
    </location>
</feature>
<feature type="helix" evidence="22">
    <location>
        <begin position="977"/>
        <end position="1000"/>
    </location>
</feature>
<feature type="turn" evidence="22">
    <location>
        <begin position="1011"/>
        <end position="1014"/>
    </location>
</feature>
<feature type="helix" evidence="22">
    <location>
        <begin position="1022"/>
        <end position="1024"/>
    </location>
</feature>
<feature type="helix" evidence="22">
    <location>
        <begin position="1027"/>
        <end position="1046"/>
    </location>
</feature>
<feature type="strand" evidence="22">
    <location>
        <begin position="1050"/>
        <end position="1052"/>
    </location>
</feature>
<feature type="helix" evidence="21">
    <location>
        <begin position="2612"/>
        <end position="2635"/>
    </location>
</feature>
<feature type="turn" evidence="21">
    <location>
        <begin position="2646"/>
        <end position="2649"/>
    </location>
</feature>
<feature type="helix" evidence="21">
    <location>
        <begin position="2657"/>
        <end position="2659"/>
    </location>
</feature>
<feature type="helix" evidence="21">
    <location>
        <begin position="2662"/>
        <end position="2681"/>
    </location>
</feature>
<feature type="strand" evidence="21">
    <location>
        <begin position="2685"/>
        <end position="2688"/>
    </location>
</feature>
<feature type="helix" evidence="21">
    <location>
        <begin position="2695"/>
        <end position="2704"/>
    </location>
</feature>
<feature type="helix" evidence="21">
    <location>
        <begin position="2723"/>
        <end position="2725"/>
    </location>
</feature>
<feature type="helix" evidence="21">
    <location>
        <begin position="2730"/>
        <end position="2757"/>
    </location>
</feature>
<feature type="helix" evidence="21">
    <location>
        <begin position="2769"/>
        <end position="2771"/>
    </location>
</feature>
<feature type="helix" evidence="21">
    <location>
        <begin position="2774"/>
        <end position="2792"/>
    </location>
</feature>
<feature type="turn" evidence="21">
    <location>
        <begin position="2793"/>
        <end position="2795"/>
    </location>
</feature>
<feature type="strand" evidence="21">
    <location>
        <begin position="2796"/>
        <end position="2799"/>
    </location>
</feature>